<reference key="1">
    <citation type="journal article" date="2009" name="Genome Biol.">
        <title>Genomic and genetic analyses of diversity and plant interactions of Pseudomonas fluorescens.</title>
        <authorList>
            <person name="Silby M.W."/>
            <person name="Cerdeno-Tarraga A.M."/>
            <person name="Vernikos G.S."/>
            <person name="Giddens S.R."/>
            <person name="Jackson R.W."/>
            <person name="Preston G.M."/>
            <person name="Zhang X.-X."/>
            <person name="Moon C.D."/>
            <person name="Gehrig S.M."/>
            <person name="Godfrey S.A.C."/>
            <person name="Knight C.G."/>
            <person name="Malone J.G."/>
            <person name="Robinson Z."/>
            <person name="Spiers A.J."/>
            <person name="Harris S."/>
            <person name="Challis G.L."/>
            <person name="Yaxley A.M."/>
            <person name="Harris D."/>
            <person name="Seeger K."/>
            <person name="Murphy L."/>
            <person name="Rutter S."/>
            <person name="Squares R."/>
            <person name="Quail M.A."/>
            <person name="Saunders E."/>
            <person name="Mavromatis K."/>
            <person name="Brettin T.S."/>
            <person name="Bentley S.D."/>
            <person name="Hothersall J."/>
            <person name="Stephens E."/>
            <person name="Thomas C.M."/>
            <person name="Parkhill J."/>
            <person name="Levy S.B."/>
            <person name="Rainey P.B."/>
            <person name="Thomson N.R."/>
        </authorList>
    </citation>
    <scope>NUCLEOTIDE SEQUENCE [LARGE SCALE GENOMIC DNA]</scope>
    <source>
        <strain>Pf0-1</strain>
    </source>
</reference>
<keyword id="KW-0975">Bacterial flagellum</keyword>
<keyword id="KW-0574">Periplasm</keyword>
<keyword id="KW-0732">Signal</keyword>
<dbReference type="EMBL" id="CP000094">
    <property type="protein sequence ID" value="ABA73247.1"/>
    <property type="molecule type" value="Genomic_DNA"/>
</dbReference>
<dbReference type="RefSeq" id="WP_011333019.1">
    <property type="nucleotide sequence ID" value="NC_007492.2"/>
</dbReference>
<dbReference type="SMR" id="Q3KG59"/>
<dbReference type="KEGG" id="pfo:Pfl01_1504"/>
<dbReference type="eggNOG" id="COG1706">
    <property type="taxonomic scope" value="Bacteria"/>
</dbReference>
<dbReference type="HOGENOM" id="CLU_045235_1_0_6"/>
<dbReference type="Proteomes" id="UP000002704">
    <property type="component" value="Chromosome"/>
</dbReference>
<dbReference type="GO" id="GO:0009428">
    <property type="term" value="C:bacterial-type flagellum basal body, distal rod, P ring"/>
    <property type="evidence" value="ECO:0007669"/>
    <property type="project" value="InterPro"/>
</dbReference>
<dbReference type="GO" id="GO:0030288">
    <property type="term" value="C:outer membrane-bounded periplasmic space"/>
    <property type="evidence" value="ECO:0007669"/>
    <property type="project" value="InterPro"/>
</dbReference>
<dbReference type="GO" id="GO:0005198">
    <property type="term" value="F:structural molecule activity"/>
    <property type="evidence" value="ECO:0007669"/>
    <property type="project" value="InterPro"/>
</dbReference>
<dbReference type="GO" id="GO:0071973">
    <property type="term" value="P:bacterial-type flagellum-dependent cell motility"/>
    <property type="evidence" value="ECO:0007669"/>
    <property type="project" value="InterPro"/>
</dbReference>
<dbReference type="HAMAP" id="MF_00416">
    <property type="entry name" value="FlgI"/>
    <property type="match status" value="1"/>
</dbReference>
<dbReference type="InterPro" id="IPR001782">
    <property type="entry name" value="Flag_FlgI"/>
</dbReference>
<dbReference type="NCBIfam" id="NF003676">
    <property type="entry name" value="PRK05303.1"/>
    <property type="match status" value="1"/>
</dbReference>
<dbReference type="PANTHER" id="PTHR30381">
    <property type="entry name" value="FLAGELLAR P-RING PERIPLASMIC PROTEIN FLGI"/>
    <property type="match status" value="1"/>
</dbReference>
<dbReference type="PANTHER" id="PTHR30381:SF0">
    <property type="entry name" value="FLAGELLAR P-RING PROTEIN"/>
    <property type="match status" value="1"/>
</dbReference>
<dbReference type="Pfam" id="PF02119">
    <property type="entry name" value="FlgI"/>
    <property type="match status" value="1"/>
</dbReference>
<dbReference type="PRINTS" id="PR01010">
    <property type="entry name" value="FLGPRINGFLGI"/>
</dbReference>
<gene>
    <name evidence="1" type="primary">flgI</name>
    <name type="ordered locus">Pfl01_1504</name>
</gene>
<feature type="signal peptide" evidence="1">
    <location>
        <begin position="1"/>
        <end position="15"/>
    </location>
</feature>
<feature type="chain" id="PRO_0000236311" description="Flagellar P-ring protein">
    <location>
        <begin position="16"/>
        <end position="362"/>
    </location>
</feature>
<protein>
    <recommendedName>
        <fullName evidence="1">Flagellar P-ring protein</fullName>
    </recommendedName>
    <alternativeName>
        <fullName evidence="1">Basal body P-ring protein</fullName>
    </alternativeName>
</protein>
<proteinExistence type="inferred from homology"/>
<comment type="function">
    <text evidence="1">Assembles around the rod to form the L-ring and probably protects the motor/basal body from shearing forces during rotation.</text>
</comment>
<comment type="subunit">
    <text evidence="1">The basal body constitutes a major portion of the flagellar organelle and consists of four rings (L,P,S, and M) mounted on a central rod.</text>
</comment>
<comment type="subcellular location">
    <subcellularLocation>
        <location evidence="1">Periplasm</location>
    </subcellularLocation>
    <subcellularLocation>
        <location evidence="1">Bacterial flagellum basal body</location>
    </subcellularLocation>
</comment>
<comment type="similarity">
    <text evidence="1">Belongs to the FlgI family.</text>
</comment>
<name>FLGI_PSEPF</name>
<evidence type="ECO:0000255" key="1">
    <source>
        <dbReference type="HAMAP-Rule" id="MF_00416"/>
    </source>
</evidence>
<accession>Q3KG59</accession>
<organism>
    <name type="scientific">Pseudomonas fluorescens (strain Pf0-1)</name>
    <dbReference type="NCBI Taxonomy" id="205922"/>
    <lineage>
        <taxon>Bacteria</taxon>
        <taxon>Pseudomonadati</taxon>
        <taxon>Pseudomonadota</taxon>
        <taxon>Gammaproteobacteria</taxon>
        <taxon>Pseudomonadales</taxon>
        <taxon>Pseudomonadaceae</taxon>
        <taxon>Pseudomonas</taxon>
    </lineage>
</organism>
<sequence length="362" mass="37233">MLAAALMSAAFGAHAERLKDIASISGVRSNQLIGYGLVVGLNGTGDQTTQTPFTLQTFNNMLSQFGIKVPPGSGNVQLKNVAAVSVSADLPAFAKPGQQVDITVSSIGNSKSLRGGTLLLTPLKGIDGNVYAIAQGNLVVGGFDAEGRDGSKITVNVPSAGRIPGGASVERSVPSGFNQGNSLTLNLNRSDFTTAKRIVDKINDMLGPGVAQAIDGGSIRVTAPLDPSQRVDYLSILENLEVDPGQAVAKVIINSRTGTIVIGQNVKVSPAAVTHGSLTVTITEDPIVSQPGPLSNGQTAVVPRSRVNAEQEAKPMFKFGPGTTLDEIVRAVNQVGAAPGDLMAILEALKQAGALQADLIVI</sequence>